<accession>Q49L17</accession>
<evidence type="ECO:0000255" key="1">
    <source>
        <dbReference type="HAMAP-Rule" id="MF_01390"/>
    </source>
</evidence>
<keyword id="KW-0150">Chloroplast</keyword>
<keyword id="KW-0507">mRNA processing</keyword>
<keyword id="KW-0934">Plastid</keyword>
<keyword id="KW-0694">RNA-binding</keyword>
<keyword id="KW-0819">tRNA processing</keyword>
<dbReference type="EMBL" id="AY780259">
    <property type="protein sequence ID" value="AAX21010.1"/>
    <property type="molecule type" value="Genomic_DNA"/>
</dbReference>
<dbReference type="RefSeq" id="YP_636280.1">
    <property type="nucleotide sequence ID" value="NC_008115.1"/>
</dbReference>
<dbReference type="GeneID" id="4108469"/>
<dbReference type="GO" id="GO:0009507">
    <property type="term" value="C:chloroplast"/>
    <property type="evidence" value="ECO:0007669"/>
    <property type="project" value="UniProtKB-SubCell"/>
</dbReference>
<dbReference type="GO" id="GO:0003723">
    <property type="term" value="F:RNA binding"/>
    <property type="evidence" value="ECO:0007669"/>
    <property type="project" value="UniProtKB-KW"/>
</dbReference>
<dbReference type="GO" id="GO:0006397">
    <property type="term" value="P:mRNA processing"/>
    <property type="evidence" value="ECO:0007669"/>
    <property type="project" value="UniProtKB-KW"/>
</dbReference>
<dbReference type="GO" id="GO:0008380">
    <property type="term" value="P:RNA splicing"/>
    <property type="evidence" value="ECO:0007669"/>
    <property type="project" value="UniProtKB-UniRule"/>
</dbReference>
<dbReference type="GO" id="GO:0008033">
    <property type="term" value="P:tRNA processing"/>
    <property type="evidence" value="ECO:0007669"/>
    <property type="project" value="UniProtKB-KW"/>
</dbReference>
<dbReference type="HAMAP" id="MF_01390">
    <property type="entry name" value="MatK"/>
    <property type="match status" value="1"/>
</dbReference>
<dbReference type="InterPro" id="IPR024937">
    <property type="entry name" value="Domain_X"/>
</dbReference>
<dbReference type="InterPro" id="IPR002866">
    <property type="entry name" value="Maturase_MatK"/>
</dbReference>
<dbReference type="InterPro" id="IPR024942">
    <property type="entry name" value="Maturase_MatK_N"/>
</dbReference>
<dbReference type="PANTHER" id="PTHR34811">
    <property type="entry name" value="MATURASE K"/>
    <property type="match status" value="1"/>
</dbReference>
<dbReference type="PANTHER" id="PTHR34811:SF1">
    <property type="entry name" value="MATURASE K"/>
    <property type="match status" value="1"/>
</dbReference>
<dbReference type="Pfam" id="PF01348">
    <property type="entry name" value="Intron_maturas2"/>
    <property type="match status" value="1"/>
</dbReference>
<dbReference type="Pfam" id="PF01824">
    <property type="entry name" value="MatK_N"/>
    <property type="match status" value="1"/>
</dbReference>
<comment type="function">
    <text evidence="1">Usually encoded in the trnK tRNA gene intron. Probably assists in splicing its own and other chloroplast group II introns.</text>
</comment>
<comment type="subcellular location">
    <subcellularLocation>
        <location>Plastid</location>
        <location>Chloroplast</location>
    </subcellularLocation>
</comment>
<comment type="similarity">
    <text evidence="1">Belongs to the intron maturase 2 family. MatK subfamily.</text>
</comment>
<sequence length="503" mass="60123">MEEFQGYFELDRSRQHDFLYPLLFREYIYALAHDHGLKKSILFENAGYDNKSSSIIVKRLITRMYQQNPLIFSANDSIQNPFFGQNKNFYSQIISEGFAVIVEIPFSLRLVSSLERKEIAKSHKLRAIHSIFPFLEDKFSHLDYVSDVLIPYHIHLEILVQTLRYWVNDASSLHLLRFFLHEYWNSLITQKNHITIFSKGNPRLFLFLYNSHICEYEYFFLFLRNQSSHLRSTSSGIFFERIYFYVKIEHFVKVFYDNDFQCILWFFKDPFMHYVRYQGKSILASKDTPLLMKKWKYYLVNLWQYHFYAWFQPGRIDINQLCKYSLYFLGYRSSVRLNPSVVRSQMLENSFLINNAMKKFETIVPIIPLIGSLSKANFCDTLGHPISKPTRADSSDSDIIDRFLRISRNLSHYHSGSSKKKSLYRVKYILRLSCVKTLARKHKKTVRTFLKRLGSEFLEEFLTEEEVVLSLIFPRTYSTSRRLYRGRIWYLDITSINDLVNYE</sequence>
<reference key="1">
    <citation type="journal article" date="2005" name="DNA Res.">
        <title>Complete nucleotide sequence of the chloroplast genome from the Tasmanian blue gum, Eucalyptus globulus (Myrtaceae).</title>
        <authorList>
            <person name="Steane D.A."/>
        </authorList>
    </citation>
    <scope>NUCLEOTIDE SEQUENCE [LARGE SCALE GENOMIC DNA]</scope>
</reference>
<protein>
    <recommendedName>
        <fullName evidence="1">Maturase K</fullName>
    </recommendedName>
    <alternativeName>
        <fullName evidence="1">Intron maturase</fullName>
    </alternativeName>
</protein>
<feature type="chain" id="PRO_0000355934" description="Maturase K">
    <location>
        <begin position="1"/>
        <end position="503"/>
    </location>
</feature>
<organism>
    <name type="scientific">Eucalyptus globulus subsp. globulus</name>
    <name type="common">Tasmanian blue gum</name>
    <dbReference type="NCBI Taxonomy" id="71271"/>
    <lineage>
        <taxon>Eukaryota</taxon>
        <taxon>Viridiplantae</taxon>
        <taxon>Streptophyta</taxon>
        <taxon>Embryophyta</taxon>
        <taxon>Tracheophyta</taxon>
        <taxon>Spermatophyta</taxon>
        <taxon>Magnoliopsida</taxon>
        <taxon>eudicotyledons</taxon>
        <taxon>Gunneridae</taxon>
        <taxon>Pentapetalae</taxon>
        <taxon>rosids</taxon>
        <taxon>malvids</taxon>
        <taxon>Myrtales</taxon>
        <taxon>Myrtaceae</taxon>
        <taxon>Myrtoideae</taxon>
        <taxon>Eucalypteae</taxon>
        <taxon>Eucalyptus</taxon>
    </lineage>
</organism>
<proteinExistence type="inferred from homology"/>
<name>MATK_EUCGG</name>
<gene>
    <name evidence="1" type="primary">matK</name>
</gene>
<geneLocation type="chloroplast"/>